<name>CALR2_ARATH</name>
<protein>
    <recommendedName>
        <fullName>Calreticulin-2</fullName>
    </recommendedName>
</protein>
<sequence length="424" mass="48157">MAKMIPSLVSLILIGLVAIASAAVIFEERFDDGWENRWVKSEWKKDDNTAGEWKHTAGNWSGDANDKGIQTSEDYRFYAISAEFPEFSNKDKTLVFQFSVKHEQKLDCGGGYMKLLSGDVDQKKFGGDTPYSIMFGPDICGYSTKKVHAILTYNEANHLIKKDVPCETDQLTHVYTFILRPDATYSILIDNVEKQTGSLYSDWDLLPPKKIKDPSAKKPEDWDEQEYISDPEDKKPDGYDDIPKEIPDTDSKKPEDWDDEEDGEWTAPTIPNPEYMGEWKPKQIKNPNYKGKWEAPLIDNPDFKDDPELYVFPKLKYVGLELWQVKSGSLFDNVLICDDPDYAKKLADETWGKLKDAEKAAFDEAEKKNEEEESKDAPAESDAEDEPEDDEGGDDSDSESKAEETKSVDSEETSEKDATAHDEL</sequence>
<reference key="1">
    <citation type="journal article" date="2000" name="Nature">
        <title>Sequence and analysis of chromosome 1 of the plant Arabidopsis thaliana.</title>
        <authorList>
            <person name="Theologis A."/>
            <person name="Ecker J.R."/>
            <person name="Palm C.J."/>
            <person name="Federspiel N.A."/>
            <person name="Kaul S."/>
            <person name="White O."/>
            <person name="Alonso J."/>
            <person name="Altafi H."/>
            <person name="Araujo R."/>
            <person name="Bowman C.L."/>
            <person name="Brooks S.Y."/>
            <person name="Buehler E."/>
            <person name="Chan A."/>
            <person name="Chao Q."/>
            <person name="Chen H."/>
            <person name="Cheuk R.F."/>
            <person name="Chin C.W."/>
            <person name="Chung M.K."/>
            <person name="Conn L."/>
            <person name="Conway A.B."/>
            <person name="Conway A.R."/>
            <person name="Creasy T.H."/>
            <person name="Dewar K."/>
            <person name="Dunn P."/>
            <person name="Etgu P."/>
            <person name="Feldblyum T.V."/>
            <person name="Feng J.-D."/>
            <person name="Fong B."/>
            <person name="Fujii C.Y."/>
            <person name="Gill J.E."/>
            <person name="Goldsmith A.D."/>
            <person name="Haas B."/>
            <person name="Hansen N.F."/>
            <person name="Hughes B."/>
            <person name="Huizar L."/>
            <person name="Hunter J.L."/>
            <person name="Jenkins J."/>
            <person name="Johnson-Hopson C."/>
            <person name="Khan S."/>
            <person name="Khaykin E."/>
            <person name="Kim C.J."/>
            <person name="Koo H.L."/>
            <person name="Kremenetskaia I."/>
            <person name="Kurtz D.B."/>
            <person name="Kwan A."/>
            <person name="Lam B."/>
            <person name="Langin-Hooper S."/>
            <person name="Lee A."/>
            <person name="Lee J.M."/>
            <person name="Lenz C.A."/>
            <person name="Li J.H."/>
            <person name="Li Y.-P."/>
            <person name="Lin X."/>
            <person name="Liu S.X."/>
            <person name="Liu Z.A."/>
            <person name="Luros J.S."/>
            <person name="Maiti R."/>
            <person name="Marziali A."/>
            <person name="Militscher J."/>
            <person name="Miranda M."/>
            <person name="Nguyen M."/>
            <person name="Nierman W.C."/>
            <person name="Osborne B.I."/>
            <person name="Pai G."/>
            <person name="Peterson J."/>
            <person name="Pham P.K."/>
            <person name="Rizzo M."/>
            <person name="Rooney T."/>
            <person name="Rowley D."/>
            <person name="Sakano H."/>
            <person name="Salzberg S.L."/>
            <person name="Schwartz J.R."/>
            <person name="Shinn P."/>
            <person name="Southwick A.M."/>
            <person name="Sun H."/>
            <person name="Tallon L.J."/>
            <person name="Tambunga G."/>
            <person name="Toriumi M.J."/>
            <person name="Town C.D."/>
            <person name="Utterback T."/>
            <person name="Van Aken S."/>
            <person name="Vaysberg M."/>
            <person name="Vysotskaia V.S."/>
            <person name="Walker M."/>
            <person name="Wu D."/>
            <person name="Yu G."/>
            <person name="Fraser C.M."/>
            <person name="Venter J.C."/>
            <person name="Davis R.W."/>
        </authorList>
    </citation>
    <scope>NUCLEOTIDE SEQUENCE [LARGE SCALE GENOMIC DNA]</scope>
    <source>
        <strain>cv. Columbia</strain>
    </source>
</reference>
<reference key="2">
    <citation type="journal article" date="2017" name="Plant J.">
        <title>Araport11: a complete reannotation of the Arabidopsis thaliana reference genome.</title>
        <authorList>
            <person name="Cheng C.Y."/>
            <person name="Krishnakumar V."/>
            <person name="Chan A.P."/>
            <person name="Thibaud-Nissen F."/>
            <person name="Schobel S."/>
            <person name="Town C.D."/>
        </authorList>
    </citation>
    <scope>GENOME REANNOTATION</scope>
    <source>
        <strain>cv. Columbia</strain>
    </source>
</reference>
<reference key="3">
    <citation type="journal article" date="2003" name="Science">
        <title>Empirical analysis of transcriptional activity in the Arabidopsis genome.</title>
        <authorList>
            <person name="Yamada K."/>
            <person name="Lim J."/>
            <person name="Dale J.M."/>
            <person name="Chen H."/>
            <person name="Shinn P."/>
            <person name="Palm C.J."/>
            <person name="Southwick A.M."/>
            <person name="Wu H.C."/>
            <person name="Kim C.J."/>
            <person name="Nguyen M."/>
            <person name="Pham P.K."/>
            <person name="Cheuk R.F."/>
            <person name="Karlin-Newmann G."/>
            <person name="Liu S.X."/>
            <person name="Lam B."/>
            <person name="Sakano H."/>
            <person name="Wu T."/>
            <person name="Yu G."/>
            <person name="Miranda M."/>
            <person name="Quach H.L."/>
            <person name="Tripp M."/>
            <person name="Chang C.H."/>
            <person name="Lee J.M."/>
            <person name="Toriumi M.J."/>
            <person name="Chan M.M."/>
            <person name="Tang C.C."/>
            <person name="Onodera C.S."/>
            <person name="Deng J.M."/>
            <person name="Akiyama K."/>
            <person name="Ansari Y."/>
            <person name="Arakawa T."/>
            <person name="Banh J."/>
            <person name="Banno F."/>
            <person name="Bowser L."/>
            <person name="Brooks S.Y."/>
            <person name="Carninci P."/>
            <person name="Chao Q."/>
            <person name="Choy N."/>
            <person name="Enju A."/>
            <person name="Goldsmith A.D."/>
            <person name="Gurjal M."/>
            <person name="Hansen N.F."/>
            <person name="Hayashizaki Y."/>
            <person name="Johnson-Hopson C."/>
            <person name="Hsuan V.W."/>
            <person name="Iida K."/>
            <person name="Karnes M."/>
            <person name="Khan S."/>
            <person name="Koesema E."/>
            <person name="Ishida J."/>
            <person name="Jiang P.X."/>
            <person name="Jones T."/>
            <person name="Kawai J."/>
            <person name="Kamiya A."/>
            <person name="Meyers C."/>
            <person name="Nakajima M."/>
            <person name="Narusaka M."/>
            <person name="Seki M."/>
            <person name="Sakurai T."/>
            <person name="Satou M."/>
            <person name="Tamse R."/>
            <person name="Vaysberg M."/>
            <person name="Wallender E.K."/>
            <person name="Wong C."/>
            <person name="Yamamura Y."/>
            <person name="Yuan S."/>
            <person name="Shinozaki K."/>
            <person name="Davis R.W."/>
            <person name="Theologis A."/>
            <person name="Ecker J.R."/>
        </authorList>
    </citation>
    <scope>NUCLEOTIDE SEQUENCE [LARGE SCALE MRNA]</scope>
    <source>
        <strain>cv. Columbia</strain>
    </source>
</reference>
<reference key="4">
    <citation type="journal article" date="1997" name="Plant Physiol.">
        <title>Abundant accumulation of the calcium-binding molecular chaperone calreticulin in specific floral tissues of Arabidopsis thaliana.</title>
        <authorList>
            <person name="Nelson D.E."/>
            <person name="Glaunsinger B."/>
            <person name="Bohnert H.J."/>
        </authorList>
    </citation>
    <scope>NUCLEOTIDE SEQUENCE [GENOMIC DNA] OF 1-174</scope>
</reference>
<reference key="5">
    <citation type="online journal article" date="1995" name="Plant Gene Register">
        <title>Nucleotide sequence of an Arabidopsis thaliana cDNA encoding a protein homologous to plant and animal calreticulins.</title>
        <authorList>
            <person name="Benedetti C.E."/>
            <person name="Turner J.G."/>
        </authorList>
        <locator>PGR95-047</locator>
    </citation>
    <scope>NUCLEOTIDE SEQUENCE [MRNA] OF 16-424</scope>
    <source>
        <strain>cv. Landsberg erecta</strain>
        <tissue>Flower</tissue>
    </source>
</reference>
<reference key="6">
    <citation type="journal article" date="2009" name="Plant Physiol.">
        <title>Large-scale Arabidopsis phosphoproteome profiling reveals novel chloroplast kinase substrates and phosphorylation networks.</title>
        <authorList>
            <person name="Reiland S."/>
            <person name="Messerli G."/>
            <person name="Baerenfaller K."/>
            <person name="Gerrits B."/>
            <person name="Endler A."/>
            <person name="Grossmann J."/>
            <person name="Gruissem W."/>
            <person name="Baginsky S."/>
        </authorList>
    </citation>
    <scope>IDENTIFICATION BY MASS SPECTROMETRY [LARGE SCALE ANALYSIS]</scope>
</reference>
<comment type="function">
    <text evidence="1">Molecular calcium-binding chaperone promoting folding, oligomeric assembly and quality control in the ER via the calreticulin/calnexin cycle. This lectin may interact transiently with almost all of the monoglucosylated glycoproteins that are synthesized in the ER (By similarity).</text>
</comment>
<comment type="subcellular location">
    <subcellularLocation>
        <location evidence="6">Endoplasmic reticulum lumen</location>
    </subcellularLocation>
</comment>
<comment type="domain">
    <text evidence="1">Can be divided into a N-terminal globular domain, a proline-rich P-domain forming an elongated arm-like structure and a C-terminal acidic domain. The P-domain binds one molecule of calcium with high affinity, whereas the acidic C-domain binds multiple calcium ions with low affinity (By similarity).</text>
</comment>
<comment type="domain">
    <text evidence="1">The interaction with glycans occurs through a binding site in the globular lectin domain.</text>
</comment>
<comment type="domain">
    <text evidence="1">The zinc binding sites are localized to the N-domain.</text>
</comment>
<comment type="similarity">
    <text evidence="8">Belongs to the calreticulin family.</text>
</comment>
<comment type="sequence caution" evidence="8">
    <conflict type="erroneous gene model prediction">
        <sequence resource="EMBL-CDS" id="AAC24083"/>
    </conflict>
</comment>
<comment type="sequence caution" evidence="8">
    <conflict type="erroneous initiation">
        <sequence resource="EMBL-CDS" id="AAC49696"/>
    </conflict>
</comment>
<accession>Q38858</accession>
<accession>O04152</accession>
<accession>O80486</accession>
<accession>Q94AW7</accession>
<feature type="signal peptide" evidence="5">
    <location>
        <begin position="1"/>
        <end position="22"/>
    </location>
</feature>
<feature type="chain" id="PRO_0000004185" description="Calreticulin-2">
    <location>
        <begin position="23"/>
        <end position="424"/>
    </location>
</feature>
<feature type="repeat" description="1-1">
    <location>
        <begin position="194"/>
        <end position="205"/>
    </location>
</feature>
<feature type="repeat" description="1-2">
    <location>
        <begin position="213"/>
        <end position="224"/>
    </location>
</feature>
<feature type="repeat" description="1-3">
    <location>
        <begin position="230"/>
        <end position="241"/>
    </location>
</feature>
<feature type="repeat" description="1-4">
    <location>
        <begin position="248"/>
        <end position="259"/>
    </location>
</feature>
<feature type="repeat" description="2-1">
    <location>
        <begin position="263"/>
        <end position="273"/>
    </location>
</feature>
<feature type="repeat" description="2-2">
    <location>
        <begin position="277"/>
        <end position="287"/>
    </location>
</feature>
<feature type="repeat" description="2-3">
    <location>
        <begin position="291"/>
        <end position="301"/>
    </location>
</feature>
<feature type="region of interest" description="4 X approximate repeats">
    <location>
        <begin position="194"/>
        <end position="259"/>
    </location>
</feature>
<feature type="region of interest" description="Disordered" evidence="7">
    <location>
        <begin position="210"/>
        <end position="279"/>
    </location>
</feature>
<feature type="region of interest" description="3 X approximate repeats">
    <location>
        <begin position="263"/>
        <end position="301"/>
    </location>
</feature>
<feature type="region of interest" description="Disordered" evidence="7">
    <location>
        <begin position="362"/>
        <end position="424"/>
    </location>
</feature>
<feature type="short sequence motif" description="Prevents secretion from ER" evidence="6">
    <location>
        <begin position="421"/>
        <end position="424"/>
    </location>
</feature>
<feature type="compositionally biased region" description="Basic and acidic residues" evidence="7">
    <location>
        <begin position="210"/>
        <end position="220"/>
    </location>
</feature>
<feature type="compositionally biased region" description="Acidic residues" evidence="7">
    <location>
        <begin position="221"/>
        <end position="230"/>
    </location>
</feature>
<feature type="compositionally biased region" description="Basic and acidic residues" evidence="7">
    <location>
        <begin position="231"/>
        <end position="255"/>
    </location>
</feature>
<feature type="compositionally biased region" description="Basic and acidic residues" evidence="7">
    <location>
        <begin position="362"/>
        <end position="378"/>
    </location>
</feature>
<feature type="compositionally biased region" description="Acidic residues" evidence="7">
    <location>
        <begin position="379"/>
        <end position="397"/>
    </location>
</feature>
<feature type="compositionally biased region" description="Basic and acidic residues" evidence="7">
    <location>
        <begin position="398"/>
        <end position="424"/>
    </location>
</feature>
<feature type="binding site" evidence="3">
    <location>
        <position position="112"/>
    </location>
    <ligand>
        <name>an alpha-D-glucoside</name>
        <dbReference type="ChEBI" id="CHEBI:22390"/>
    </ligand>
</feature>
<feature type="binding site" evidence="3">
    <location>
        <position position="114"/>
    </location>
    <ligand>
        <name>an alpha-D-glucoside</name>
        <dbReference type="ChEBI" id="CHEBI:22390"/>
    </ligand>
</feature>
<feature type="binding site" evidence="3">
    <location>
        <position position="131"/>
    </location>
    <ligand>
        <name>an alpha-D-glucoside</name>
        <dbReference type="ChEBI" id="CHEBI:22390"/>
    </ligand>
</feature>
<feature type="binding site" evidence="3">
    <location>
        <position position="138"/>
    </location>
    <ligand>
        <name>an alpha-D-glucoside</name>
        <dbReference type="ChEBI" id="CHEBI:22390"/>
    </ligand>
</feature>
<feature type="binding site" evidence="3">
    <location>
        <position position="321"/>
    </location>
    <ligand>
        <name>an alpha-D-glucoside</name>
        <dbReference type="ChEBI" id="CHEBI:22390"/>
    </ligand>
</feature>
<feature type="modified residue" description="Phosphoserine" evidence="2">
    <location>
        <position position="381"/>
    </location>
</feature>
<feature type="modified residue" description="Phosphoserine" evidence="4">
    <location>
        <position position="396"/>
    </location>
</feature>
<feature type="glycosylation site" description="N-linked (GlcNAc...) asparagine" evidence="5">
    <location>
        <position position="59"/>
    </location>
</feature>
<feature type="disulfide bond" evidence="1">
    <location>
        <begin position="108"/>
        <end position="140"/>
    </location>
</feature>
<feature type="sequence conflict" description="In Ref. 5; AAA80652." evidence="8" ref="5">
    <original>LVAI</original>
    <variation>NSAR</variation>
    <location>
        <begin position="16"/>
        <end position="19"/>
    </location>
</feature>
<feature type="sequence conflict" description="In Ref. 4; AAC49696 and 5; AAA80652." evidence="8" ref="4 5">
    <original>E</original>
    <variation>G</variation>
    <location>
        <position position="155"/>
    </location>
</feature>
<feature type="sequence conflict" description="In Ref. 5; AAA80652." evidence="8" ref="5">
    <original>P</original>
    <variation>T</variation>
    <location>
        <position position="236"/>
    </location>
</feature>
<feature type="sequence conflict" description="In Ref. 5; AAA80652." evidence="8" ref="5">
    <original>V</original>
    <variation>E</variation>
    <location>
        <position position="408"/>
    </location>
</feature>
<evidence type="ECO:0000250" key="1"/>
<evidence type="ECO:0000250" key="2">
    <source>
        <dbReference type="UniProtKB" id="O04151"/>
    </source>
</evidence>
<evidence type="ECO:0000250" key="3">
    <source>
        <dbReference type="UniProtKB" id="P14211"/>
    </source>
</evidence>
<evidence type="ECO:0000250" key="4">
    <source>
        <dbReference type="UniProtKB" id="P29402"/>
    </source>
</evidence>
<evidence type="ECO:0000255" key="5"/>
<evidence type="ECO:0000255" key="6">
    <source>
        <dbReference type="PROSITE-ProRule" id="PRU10138"/>
    </source>
</evidence>
<evidence type="ECO:0000256" key="7">
    <source>
        <dbReference type="SAM" id="MobiDB-lite"/>
    </source>
</evidence>
<evidence type="ECO:0000305" key="8"/>
<organism>
    <name type="scientific">Arabidopsis thaliana</name>
    <name type="common">Mouse-ear cress</name>
    <dbReference type="NCBI Taxonomy" id="3702"/>
    <lineage>
        <taxon>Eukaryota</taxon>
        <taxon>Viridiplantae</taxon>
        <taxon>Streptophyta</taxon>
        <taxon>Embryophyta</taxon>
        <taxon>Tracheophyta</taxon>
        <taxon>Spermatophyta</taxon>
        <taxon>Magnoliopsida</taxon>
        <taxon>eudicotyledons</taxon>
        <taxon>Gunneridae</taxon>
        <taxon>Pentapetalae</taxon>
        <taxon>rosids</taxon>
        <taxon>malvids</taxon>
        <taxon>Brassicales</taxon>
        <taxon>Brassicaceae</taxon>
        <taxon>Camelineae</taxon>
        <taxon>Arabidopsis</taxon>
    </lineage>
</organism>
<gene>
    <name type="primary">CRT2</name>
    <name type="synonym">CRTL</name>
    <name type="ordered locus">At1g09210</name>
    <name type="ORF">T12M4.8</name>
</gene>
<proteinExistence type="evidence at protein level"/>
<keyword id="KW-0106">Calcium</keyword>
<keyword id="KW-0143">Chaperone</keyword>
<keyword id="KW-1015">Disulfide bond</keyword>
<keyword id="KW-0256">Endoplasmic reticulum</keyword>
<keyword id="KW-0325">Glycoprotein</keyword>
<keyword id="KW-0430">Lectin</keyword>
<keyword id="KW-0479">Metal-binding</keyword>
<keyword id="KW-0597">Phosphoprotein</keyword>
<keyword id="KW-1185">Reference proteome</keyword>
<keyword id="KW-0677">Repeat</keyword>
<keyword id="KW-0732">Signal</keyword>
<keyword id="KW-0862">Zinc</keyword>
<dbReference type="EMBL" id="AC003114">
    <property type="protein sequence ID" value="AAC24083.1"/>
    <property type="status" value="ALT_SEQ"/>
    <property type="molecule type" value="Genomic_DNA"/>
</dbReference>
<dbReference type="EMBL" id="CP002684">
    <property type="protein sequence ID" value="AEE28414.1"/>
    <property type="molecule type" value="Genomic_DNA"/>
</dbReference>
<dbReference type="EMBL" id="AY045656">
    <property type="protein sequence ID" value="AAK74014.1"/>
    <property type="molecule type" value="mRNA"/>
</dbReference>
<dbReference type="EMBL" id="AY059662">
    <property type="protein sequence ID" value="AAL31155.1"/>
    <property type="molecule type" value="mRNA"/>
</dbReference>
<dbReference type="EMBL" id="U66344">
    <property type="protein sequence ID" value="AAC49696.1"/>
    <property type="status" value="ALT_INIT"/>
    <property type="molecule type" value="Genomic_DNA"/>
</dbReference>
<dbReference type="EMBL" id="U27698">
    <property type="protein sequence ID" value="AAA80652.1"/>
    <property type="molecule type" value="mRNA"/>
</dbReference>
<dbReference type="PIR" id="H86224">
    <property type="entry name" value="H86224"/>
</dbReference>
<dbReference type="RefSeq" id="NP_172392.1">
    <property type="nucleotide sequence ID" value="NM_100791.4"/>
</dbReference>
<dbReference type="SMR" id="Q38858"/>
<dbReference type="BioGRID" id="22682">
    <property type="interactions" value="15"/>
</dbReference>
<dbReference type="FunCoup" id="Q38858">
    <property type="interactions" value="3530"/>
</dbReference>
<dbReference type="STRING" id="3702.Q38858"/>
<dbReference type="GlyCosmos" id="Q38858">
    <property type="glycosylation" value="1 site, No reported glycans"/>
</dbReference>
<dbReference type="GlyGen" id="Q38858">
    <property type="glycosylation" value="1 site"/>
</dbReference>
<dbReference type="iPTMnet" id="Q38858"/>
<dbReference type="PaxDb" id="3702-AT1G09210.1"/>
<dbReference type="ProteomicsDB" id="240245"/>
<dbReference type="EnsemblPlants" id="AT1G09210.1">
    <property type="protein sequence ID" value="AT1G09210.1"/>
    <property type="gene ID" value="AT1G09210"/>
</dbReference>
<dbReference type="GeneID" id="837441"/>
<dbReference type="Gramene" id="AT1G09210.1">
    <property type="protein sequence ID" value="AT1G09210.1"/>
    <property type="gene ID" value="AT1G09210"/>
</dbReference>
<dbReference type="KEGG" id="ath:AT1G09210"/>
<dbReference type="Araport" id="AT1G09210"/>
<dbReference type="TAIR" id="AT1G09210">
    <property type="gene designation" value="CRT1B"/>
</dbReference>
<dbReference type="eggNOG" id="KOG0674">
    <property type="taxonomic scope" value="Eukaryota"/>
</dbReference>
<dbReference type="HOGENOM" id="CLU_018224_0_2_1"/>
<dbReference type="InParanoid" id="Q38858"/>
<dbReference type="OMA" id="DNRAGEW"/>
<dbReference type="PhylomeDB" id="Q38858"/>
<dbReference type="CD-CODE" id="4299E36E">
    <property type="entry name" value="Nucleolus"/>
</dbReference>
<dbReference type="PRO" id="PR:Q38858"/>
<dbReference type="Proteomes" id="UP000006548">
    <property type="component" value="Chromosome 1"/>
</dbReference>
<dbReference type="ExpressionAtlas" id="Q38858">
    <property type="expression patterns" value="baseline and differential"/>
</dbReference>
<dbReference type="GO" id="GO:0005783">
    <property type="term" value="C:endoplasmic reticulum"/>
    <property type="evidence" value="ECO:0007005"/>
    <property type="project" value="TAIR"/>
</dbReference>
<dbReference type="GO" id="GO:0005788">
    <property type="term" value="C:endoplasmic reticulum lumen"/>
    <property type="evidence" value="ECO:0007669"/>
    <property type="project" value="UniProtKB-SubCell"/>
</dbReference>
<dbReference type="GO" id="GO:0005576">
    <property type="term" value="C:extracellular region"/>
    <property type="evidence" value="ECO:0007005"/>
    <property type="project" value="TAIR"/>
</dbReference>
<dbReference type="GO" id="GO:0005739">
    <property type="term" value="C:mitochondrion"/>
    <property type="evidence" value="ECO:0007005"/>
    <property type="project" value="TAIR"/>
</dbReference>
<dbReference type="GO" id="GO:0000325">
    <property type="term" value="C:plant-type vacuole"/>
    <property type="evidence" value="ECO:0007005"/>
    <property type="project" value="TAIR"/>
</dbReference>
<dbReference type="GO" id="GO:0099503">
    <property type="term" value="C:secretory vesicle"/>
    <property type="evidence" value="ECO:0007005"/>
    <property type="project" value="TAIR"/>
</dbReference>
<dbReference type="GO" id="GO:0005509">
    <property type="term" value="F:calcium ion binding"/>
    <property type="evidence" value="ECO:0007669"/>
    <property type="project" value="InterPro"/>
</dbReference>
<dbReference type="GO" id="GO:0030246">
    <property type="term" value="F:carbohydrate binding"/>
    <property type="evidence" value="ECO:0007669"/>
    <property type="project" value="UniProtKB-KW"/>
</dbReference>
<dbReference type="GO" id="GO:0051082">
    <property type="term" value="F:unfolded protein binding"/>
    <property type="evidence" value="ECO:0007669"/>
    <property type="project" value="InterPro"/>
</dbReference>
<dbReference type="GO" id="GO:0006457">
    <property type="term" value="P:protein folding"/>
    <property type="evidence" value="ECO:0007669"/>
    <property type="project" value="InterPro"/>
</dbReference>
<dbReference type="GO" id="GO:0034976">
    <property type="term" value="P:response to endoplasmic reticulum stress"/>
    <property type="evidence" value="ECO:0000353"/>
    <property type="project" value="TAIR"/>
</dbReference>
<dbReference type="FunFam" id="2.10.250.10:FF:000002">
    <property type="entry name" value="Calreticulin"/>
    <property type="match status" value="1"/>
</dbReference>
<dbReference type="FunFam" id="2.60.120.200:FF:000018">
    <property type="entry name" value="Calreticulin 1b"/>
    <property type="match status" value="1"/>
</dbReference>
<dbReference type="Gene3D" id="2.60.120.200">
    <property type="match status" value="1"/>
</dbReference>
<dbReference type="Gene3D" id="2.10.250.10">
    <property type="entry name" value="Calreticulin/calnexin, P domain"/>
    <property type="match status" value="1"/>
</dbReference>
<dbReference type="InterPro" id="IPR001580">
    <property type="entry name" value="Calret/calnex"/>
</dbReference>
<dbReference type="InterPro" id="IPR018124">
    <property type="entry name" value="Calret/calnex_CS"/>
</dbReference>
<dbReference type="InterPro" id="IPR009169">
    <property type="entry name" value="Calreticulin"/>
</dbReference>
<dbReference type="InterPro" id="IPR009033">
    <property type="entry name" value="Calreticulin/calnexin_P_dom_sf"/>
</dbReference>
<dbReference type="InterPro" id="IPR013320">
    <property type="entry name" value="ConA-like_dom_sf"/>
</dbReference>
<dbReference type="PANTHER" id="PTHR11073">
    <property type="entry name" value="CALRETICULIN AND CALNEXIN"/>
    <property type="match status" value="1"/>
</dbReference>
<dbReference type="PANTHER" id="PTHR11073:SF25">
    <property type="entry name" value="CALRETICULIN-2"/>
    <property type="match status" value="1"/>
</dbReference>
<dbReference type="Pfam" id="PF00262">
    <property type="entry name" value="Calreticulin"/>
    <property type="match status" value="2"/>
</dbReference>
<dbReference type="PIRSF" id="PIRSF002356">
    <property type="entry name" value="Calreticulin"/>
    <property type="match status" value="1"/>
</dbReference>
<dbReference type="PRINTS" id="PR00626">
    <property type="entry name" value="CALRETICULIN"/>
</dbReference>
<dbReference type="SUPFAM" id="SSF49899">
    <property type="entry name" value="Concanavalin A-like lectins/glucanases"/>
    <property type="match status" value="1"/>
</dbReference>
<dbReference type="SUPFAM" id="SSF63887">
    <property type="entry name" value="P-domain of calnexin/calreticulin"/>
    <property type="match status" value="1"/>
</dbReference>
<dbReference type="PROSITE" id="PS00803">
    <property type="entry name" value="CALRETICULIN_1"/>
    <property type="match status" value="1"/>
</dbReference>
<dbReference type="PROSITE" id="PS00804">
    <property type="entry name" value="CALRETICULIN_2"/>
    <property type="match status" value="1"/>
</dbReference>
<dbReference type="PROSITE" id="PS00805">
    <property type="entry name" value="CALRETICULIN_REPEAT"/>
    <property type="match status" value="2"/>
</dbReference>
<dbReference type="PROSITE" id="PS00014">
    <property type="entry name" value="ER_TARGET"/>
    <property type="match status" value="1"/>
</dbReference>